<name>AROB_SHEPA</name>
<reference key="1">
    <citation type="submission" date="2007-10" db="EMBL/GenBank/DDBJ databases">
        <title>Complete sequence of Shewanella pealeana ATCC 700345.</title>
        <authorList>
            <consortium name="US DOE Joint Genome Institute"/>
            <person name="Copeland A."/>
            <person name="Lucas S."/>
            <person name="Lapidus A."/>
            <person name="Barry K."/>
            <person name="Glavina del Rio T."/>
            <person name="Dalin E."/>
            <person name="Tice H."/>
            <person name="Pitluck S."/>
            <person name="Chertkov O."/>
            <person name="Brettin T."/>
            <person name="Bruce D."/>
            <person name="Detter J.C."/>
            <person name="Han C."/>
            <person name="Schmutz J."/>
            <person name="Larimer F."/>
            <person name="Land M."/>
            <person name="Hauser L."/>
            <person name="Kyrpides N."/>
            <person name="Kim E."/>
            <person name="Zhao J.-S.Z."/>
            <person name="Manno D."/>
            <person name="Hawari J."/>
            <person name="Richardson P."/>
        </authorList>
    </citation>
    <scope>NUCLEOTIDE SEQUENCE [LARGE SCALE GENOMIC DNA]</scope>
    <source>
        <strain>ATCC 700345 / ANG-SQ1</strain>
    </source>
</reference>
<keyword id="KW-0028">Amino-acid biosynthesis</keyword>
<keyword id="KW-0057">Aromatic amino acid biosynthesis</keyword>
<keyword id="KW-0170">Cobalt</keyword>
<keyword id="KW-0963">Cytoplasm</keyword>
<keyword id="KW-0456">Lyase</keyword>
<keyword id="KW-0479">Metal-binding</keyword>
<keyword id="KW-0520">NAD</keyword>
<keyword id="KW-0547">Nucleotide-binding</keyword>
<keyword id="KW-1185">Reference proteome</keyword>
<keyword id="KW-0862">Zinc</keyword>
<comment type="function">
    <text evidence="1">Catalyzes the conversion of 3-deoxy-D-arabino-heptulosonate 7-phosphate (DAHP) to dehydroquinate (DHQ).</text>
</comment>
<comment type="catalytic activity">
    <reaction evidence="1">
        <text>7-phospho-2-dehydro-3-deoxy-D-arabino-heptonate = 3-dehydroquinate + phosphate</text>
        <dbReference type="Rhea" id="RHEA:21968"/>
        <dbReference type="ChEBI" id="CHEBI:32364"/>
        <dbReference type="ChEBI" id="CHEBI:43474"/>
        <dbReference type="ChEBI" id="CHEBI:58394"/>
        <dbReference type="EC" id="4.2.3.4"/>
    </reaction>
</comment>
<comment type="cofactor">
    <cofactor evidence="1">
        <name>Co(2+)</name>
        <dbReference type="ChEBI" id="CHEBI:48828"/>
    </cofactor>
    <cofactor evidence="1">
        <name>Zn(2+)</name>
        <dbReference type="ChEBI" id="CHEBI:29105"/>
    </cofactor>
    <text evidence="1">Binds 1 divalent metal cation per subunit. Can use either Co(2+) or Zn(2+).</text>
</comment>
<comment type="cofactor">
    <cofactor evidence="1">
        <name>NAD(+)</name>
        <dbReference type="ChEBI" id="CHEBI:57540"/>
    </cofactor>
</comment>
<comment type="pathway">
    <text evidence="1">Metabolic intermediate biosynthesis; chorismate biosynthesis; chorismate from D-erythrose 4-phosphate and phosphoenolpyruvate: step 2/7.</text>
</comment>
<comment type="subcellular location">
    <subcellularLocation>
        <location evidence="1">Cytoplasm</location>
    </subcellularLocation>
</comment>
<comment type="similarity">
    <text evidence="1">Belongs to the sugar phosphate cyclases superfamily. Dehydroquinate synthase family.</text>
</comment>
<dbReference type="EC" id="4.2.3.4" evidence="1"/>
<dbReference type="EMBL" id="CP000851">
    <property type="protein sequence ID" value="ABV85567.1"/>
    <property type="molecule type" value="Genomic_DNA"/>
</dbReference>
<dbReference type="RefSeq" id="WP_012153508.1">
    <property type="nucleotide sequence ID" value="NC_009901.1"/>
</dbReference>
<dbReference type="SMR" id="A8GZ30"/>
<dbReference type="STRING" id="398579.Spea_0239"/>
<dbReference type="KEGG" id="spl:Spea_0239"/>
<dbReference type="eggNOG" id="COG0337">
    <property type="taxonomic scope" value="Bacteria"/>
</dbReference>
<dbReference type="HOGENOM" id="CLU_001201_0_2_6"/>
<dbReference type="OrthoDB" id="9806583at2"/>
<dbReference type="UniPathway" id="UPA00053">
    <property type="reaction ID" value="UER00085"/>
</dbReference>
<dbReference type="Proteomes" id="UP000002608">
    <property type="component" value="Chromosome"/>
</dbReference>
<dbReference type="GO" id="GO:0005737">
    <property type="term" value="C:cytoplasm"/>
    <property type="evidence" value="ECO:0007669"/>
    <property type="project" value="UniProtKB-SubCell"/>
</dbReference>
<dbReference type="GO" id="GO:0003856">
    <property type="term" value="F:3-dehydroquinate synthase activity"/>
    <property type="evidence" value="ECO:0007669"/>
    <property type="project" value="UniProtKB-UniRule"/>
</dbReference>
<dbReference type="GO" id="GO:0046872">
    <property type="term" value="F:metal ion binding"/>
    <property type="evidence" value="ECO:0007669"/>
    <property type="project" value="UniProtKB-KW"/>
</dbReference>
<dbReference type="GO" id="GO:0000166">
    <property type="term" value="F:nucleotide binding"/>
    <property type="evidence" value="ECO:0007669"/>
    <property type="project" value="UniProtKB-KW"/>
</dbReference>
<dbReference type="GO" id="GO:0008652">
    <property type="term" value="P:amino acid biosynthetic process"/>
    <property type="evidence" value="ECO:0007669"/>
    <property type="project" value="UniProtKB-KW"/>
</dbReference>
<dbReference type="GO" id="GO:0009073">
    <property type="term" value="P:aromatic amino acid family biosynthetic process"/>
    <property type="evidence" value="ECO:0007669"/>
    <property type="project" value="UniProtKB-KW"/>
</dbReference>
<dbReference type="GO" id="GO:0009423">
    <property type="term" value="P:chorismate biosynthetic process"/>
    <property type="evidence" value="ECO:0007669"/>
    <property type="project" value="UniProtKB-UniRule"/>
</dbReference>
<dbReference type="CDD" id="cd08195">
    <property type="entry name" value="DHQS"/>
    <property type="match status" value="1"/>
</dbReference>
<dbReference type="FunFam" id="1.20.1090.10:FF:000002">
    <property type="entry name" value="3-dehydroquinate synthase"/>
    <property type="match status" value="1"/>
</dbReference>
<dbReference type="FunFam" id="3.40.50.1970:FF:000001">
    <property type="entry name" value="3-dehydroquinate synthase"/>
    <property type="match status" value="1"/>
</dbReference>
<dbReference type="Gene3D" id="3.40.50.1970">
    <property type="match status" value="1"/>
</dbReference>
<dbReference type="Gene3D" id="1.20.1090.10">
    <property type="entry name" value="Dehydroquinate synthase-like - alpha domain"/>
    <property type="match status" value="1"/>
</dbReference>
<dbReference type="HAMAP" id="MF_00110">
    <property type="entry name" value="DHQ_synthase"/>
    <property type="match status" value="1"/>
</dbReference>
<dbReference type="InterPro" id="IPR050071">
    <property type="entry name" value="Dehydroquinate_synthase"/>
</dbReference>
<dbReference type="InterPro" id="IPR016037">
    <property type="entry name" value="DHQ_synth_AroB"/>
</dbReference>
<dbReference type="InterPro" id="IPR030963">
    <property type="entry name" value="DHQ_synth_fam"/>
</dbReference>
<dbReference type="InterPro" id="IPR030960">
    <property type="entry name" value="DHQS/DOIS_N"/>
</dbReference>
<dbReference type="InterPro" id="IPR056179">
    <property type="entry name" value="DHQS_C"/>
</dbReference>
<dbReference type="NCBIfam" id="TIGR01357">
    <property type="entry name" value="aroB"/>
    <property type="match status" value="1"/>
</dbReference>
<dbReference type="PANTHER" id="PTHR43622">
    <property type="entry name" value="3-DEHYDROQUINATE SYNTHASE"/>
    <property type="match status" value="1"/>
</dbReference>
<dbReference type="PANTHER" id="PTHR43622:SF7">
    <property type="entry name" value="3-DEHYDROQUINATE SYNTHASE, CHLOROPLASTIC"/>
    <property type="match status" value="1"/>
</dbReference>
<dbReference type="Pfam" id="PF01761">
    <property type="entry name" value="DHQ_synthase"/>
    <property type="match status" value="1"/>
</dbReference>
<dbReference type="Pfam" id="PF24621">
    <property type="entry name" value="DHQS_C"/>
    <property type="match status" value="1"/>
</dbReference>
<dbReference type="PIRSF" id="PIRSF001455">
    <property type="entry name" value="DHQ_synth"/>
    <property type="match status" value="1"/>
</dbReference>
<dbReference type="SUPFAM" id="SSF56796">
    <property type="entry name" value="Dehydroquinate synthase-like"/>
    <property type="match status" value="1"/>
</dbReference>
<feature type="chain" id="PRO_1000094613" description="3-dehydroquinate synthase">
    <location>
        <begin position="1"/>
        <end position="359"/>
    </location>
</feature>
<feature type="binding site" evidence="1">
    <location>
        <begin position="71"/>
        <end position="76"/>
    </location>
    <ligand>
        <name>NAD(+)</name>
        <dbReference type="ChEBI" id="CHEBI:57540"/>
    </ligand>
</feature>
<feature type="binding site" evidence="1">
    <location>
        <begin position="105"/>
        <end position="109"/>
    </location>
    <ligand>
        <name>NAD(+)</name>
        <dbReference type="ChEBI" id="CHEBI:57540"/>
    </ligand>
</feature>
<feature type="binding site" evidence="1">
    <location>
        <begin position="129"/>
        <end position="130"/>
    </location>
    <ligand>
        <name>NAD(+)</name>
        <dbReference type="ChEBI" id="CHEBI:57540"/>
    </ligand>
</feature>
<feature type="binding site" evidence="1">
    <location>
        <position position="142"/>
    </location>
    <ligand>
        <name>NAD(+)</name>
        <dbReference type="ChEBI" id="CHEBI:57540"/>
    </ligand>
</feature>
<feature type="binding site" evidence="1">
    <location>
        <position position="151"/>
    </location>
    <ligand>
        <name>NAD(+)</name>
        <dbReference type="ChEBI" id="CHEBI:57540"/>
    </ligand>
</feature>
<feature type="binding site" evidence="1">
    <location>
        <begin position="169"/>
        <end position="172"/>
    </location>
    <ligand>
        <name>NAD(+)</name>
        <dbReference type="ChEBI" id="CHEBI:57540"/>
    </ligand>
</feature>
<feature type="binding site" evidence="1">
    <location>
        <position position="184"/>
    </location>
    <ligand>
        <name>Zn(2+)</name>
        <dbReference type="ChEBI" id="CHEBI:29105"/>
    </ligand>
</feature>
<feature type="binding site" evidence="1">
    <location>
        <position position="247"/>
    </location>
    <ligand>
        <name>Zn(2+)</name>
        <dbReference type="ChEBI" id="CHEBI:29105"/>
    </ligand>
</feature>
<feature type="binding site" evidence="1">
    <location>
        <position position="264"/>
    </location>
    <ligand>
        <name>Zn(2+)</name>
        <dbReference type="ChEBI" id="CHEBI:29105"/>
    </ligand>
</feature>
<sequence>MAKQVLVELGERSYPIEIGQNLFSSSEPLARYLQNKNILIVTNETIAPLYLQQIEAMLSDFACVKPVILPDGEQYKTLEQMNTIFTSLLEQNLGRDTVLIALGGGVIGDMTGFAAASYQRGVDFIQIPTTLLSQVDSSVGGKTAVNHPLGKNMIGAFYQPKCVLIDTHCLSTLPKREFAAGMAEVIKYGVIWDAEFFQWLENNVEALKSLDTQALEYAISRCCEIKAEVVEKDETEQAVRALLNLGHTFGHAIEAEMGYGVWLHGEAVSAGTVLAAITSNKLGLVDESIVCRITALLAAFDLPTTAPDTMDFEQFIKHMRRDKKVLKGQLRLILPEGIGQAGIYSDVTDELLEEVISCA</sequence>
<proteinExistence type="inferred from homology"/>
<accession>A8GZ30</accession>
<evidence type="ECO:0000255" key="1">
    <source>
        <dbReference type="HAMAP-Rule" id="MF_00110"/>
    </source>
</evidence>
<protein>
    <recommendedName>
        <fullName evidence="1">3-dehydroquinate synthase</fullName>
        <shortName evidence="1">DHQS</shortName>
        <ecNumber evidence="1">4.2.3.4</ecNumber>
    </recommendedName>
</protein>
<gene>
    <name evidence="1" type="primary">aroB</name>
    <name type="ordered locus">Spea_0239</name>
</gene>
<organism>
    <name type="scientific">Shewanella pealeana (strain ATCC 700345 / ANG-SQ1)</name>
    <dbReference type="NCBI Taxonomy" id="398579"/>
    <lineage>
        <taxon>Bacteria</taxon>
        <taxon>Pseudomonadati</taxon>
        <taxon>Pseudomonadota</taxon>
        <taxon>Gammaproteobacteria</taxon>
        <taxon>Alteromonadales</taxon>
        <taxon>Shewanellaceae</taxon>
        <taxon>Shewanella</taxon>
    </lineage>
</organism>